<name>RL35_RALN1</name>
<evidence type="ECO:0000255" key="1">
    <source>
        <dbReference type="HAMAP-Rule" id="MF_00514"/>
    </source>
</evidence>
<evidence type="ECO:0000256" key="2">
    <source>
        <dbReference type="SAM" id="MobiDB-lite"/>
    </source>
</evidence>
<evidence type="ECO:0000305" key="3"/>
<proteinExistence type="inferred from homology"/>
<protein>
    <recommendedName>
        <fullName evidence="1">Large ribosomal subunit protein bL35</fullName>
    </recommendedName>
    <alternativeName>
        <fullName evidence="3">50S ribosomal protein L35</fullName>
    </alternativeName>
</protein>
<organism>
    <name type="scientific">Ralstonia nicotianae (strain ATCC BAA-1114 / GMI1000)</name>
    <name type="common">Ralstonia solanacearum</name>
    <dbReference type="NCBI Taxonomy" id="267608"/>
    <lineage>
        <taxon>Bacteria</taxon>
        <taxon>Pseudomonadati</taxon>
        <taxon>Pseudomonadota</taxon>
        <taxon>Betaproteobacteria</taxon>
        <taxon>Burkholderiales</taxon>
        <taxon>Burkholderiaceae</taxon>
        <taxon>Ralstonia</taxon>
        <taxon>Ralstonia solanacearum species complex</taxon>
    </lineage>
</organism>
<reference key="1">
    <citation type="journal article" date="2002" name="Nature">
        <title>Genome sequence of the plant pathogen Ralstonia solanacearum.</title>
        <authorList>
            <person name="Salanoubat M."/>
            <person name="Genin S."/>
            <person name="Artiguenave F."/>
            <person name="Gouzy J."/>
            <person name="Mangenot S."/>
            <person name="Arlat M."/>
            <person name="Billault A."/>
            <person name="Brottier P."/>
            <person name="Camus J.-C."/>
            <person name="Cattolico L."/>
            <person name="Chandler M."/>
            <person name="Choisne N."/>
            <person name="Claudel-Renard C."/>
            <person name="Cunnac S."/>
            <person name="Demange N."/>
            <person name="Gaspin C."/>
            <person name="Lavie M."/>
            <person name="Moisan A."/>
            <person name="Robert C."/>
            <person name="Saurin W."/>
            <person name="Schiex T."/>
            <person name="Siguier P."/>
            <person name="Thebault P."/>
            <person name="Whalen M."/>
            <person name="Wincker P."/>
            <person name="Levy M."/>
            <person name="Weissenbach J."/>
            <person name="Boucher C.A."/>
        </authorList>
    </citation>
    <scope>NUCLEOTIDE SEQUENCE [LARGE SCALE GENOMIC DNA]</scope>
    <source>
        <strain>ATCC BAA-1114 / GMI1000</strain>
    </source>
</reference>
<feature type="chain" id="PRO_0000177406" description="Large ribosomal subunit protein bL35">
    <location>
        <begin position="1"/>
        <end position="65"/>
    </location>
</feature>
<feature type="region of interest" description="Disordered" evidence="2">
    <location>
        <begin position="1"/>
        <end position="65"/>
    </location>
</feature>
<feature type="compositionally biased region" description="Basic residues" evidence="2">
    <location>
        <begin position="1"/>
        <end position="15"/>
    </location>
</feature>
<feature type="compositionally biased region" description="Basic residues" evidence="2">
    <location>
        <begin position="26"/>
        <end position="44"/>
    </location>
</feature>
<comment type="similarity">
    <text evidence="1">Belongs to the bacterial ribosomal protein bL35 family.</text>
</comment>
<gene>
    <name evidence="1" type="primary">rpmI</name>
    <name type="ordered locus">RSc1579</name>
    <name type="ORF">RS03941</name>
</gene>
<accession>Q8XZ27</accession>
<keyword id="KW-1185">Reference proteome</keyword>
<keyword id="KW-0687">Ribonucleoprotein</keyword>
<keyword id="KW-0689">Ribosomal protein</keyword>
<dbReference type="EMBL" id="AL646052">
    <property type="protein sequence ID" value="CAD15281.1"/>
    <property type="molecule type" value="Genomic_DNA"/>
</dbReference>
<dbReference type="RefSeq" id="WP_011001522.1">
    <property type="nucleotide sequence ID" value="NC_003295.1"/>
</dbReference>
<dbReference type="SMR" id="Q8XZ27"/>
<dbReference type="STRING" id="267608.RSc1579"/>
<dbReference type="EnsemblBacteria" id="CAD15281">
    <property type="protein sequence ID" value="CAD15281"/>
    <property type="gene ID" value="RSc1579"/>
</dbReference>
<dbReference type="GeneID" id="93852868"/>
<dbReference type="KEGG" id="rso:RSc1579"/>
<dbReference type="eggNOG" id="COG0291">
    <property type="taxonomic scope" value="Bacteria"/>
</dbReference>
<dbReference type="HOGENOM" id="CLU_169643_1_0_4"/>
<dbReference type="Proteomes" id="UP000001436">
    <property type="component" value="Chromosome"/>
</dbReference>
<dbReference type="GO" id="GO:0022625">
    <property type="term" value="C:cytosolic large ribosomal subunit"/>
    <property type="evidence" value="ECO:0007669"/>
    <property type="project" value="TreeGrafter"/>
</dbReference>
<dbReference type="GO" id="GO:0003735">
    <property type="term" value="F:structural constituent of ribosome"/>
    <property type="evidence" value="ECO:0007669"/>
    <property type="project" value="InterPro"/>
</dbReference>
<dbReference type="GO" id="GO:0006412">
    <property type="term" value="P:translation"/>
    <property type="evidence" value="ECO:0007669"/>
    <property type="project" value="UniProtKB-UniRule"/>
</dbReference>
<dbReference type="FunFam" id="4.10.410.60:FF:000001">
    <property type="entry name" value="50S ribosomal protein L35"/>
    <property type="match status" value="1"/>
</dbReference>
<dbReference type="Gene3D" id="4.10.410.60">
    <property type="match status" value="1"/>
</dbReference>
<dbReference type="HAMAP" id="MF_00514">
    <property type="entry name" value="Ribosomal_bL35"/>
    <property type="match status" value="1"/>
</dbReference>
<dbReference type="InterPro" id="IPR001706">
    <property type="entry name" value="Ribosomal_bL35"/>
</dbReference>
<dbReference type="InterPro" id="IPR021137">
    <property type="entry name" value="Ribosomal_bL35-like"/>
</dbReference>
<dbReference type="InterPro" id="IPR018265">
    <property type="entry name" value="Ribosomal_bL35_CS"/>
</dbReference>
<dbReference type="InterPro" id="IPR037229">
    <property type="entry name" value="Ribosomal_bL35_sf"/>
</dbReference>
<dbReference type="NCBIfam" id="TIGR00001">
    <property type="entry name" value="rpmI_bact"/>
    <property type="match status" value="1"/>
</dbReference>
<dbReference type="PANTHER" id="PTHR33343">
    <property type="entry name" value="54S RIBOSOMAL PROTEIN BL35M"/>
    <property type="match status" value="1"/>
</dbReference>
<dbReference type="PANTHER" id="PTHR33343:SF1">
    <property type="entry name" value="LARGE RIBOSOMAL SUBUNIT PROTEIN BL35M"/>
    <property type="match status" value="1"/>
</dbReference>
<dbReference type="Pfam" id="PF01632">
    <property type="entry name" value="Ribosomal_L35p"/>
    <property type="match status" value="1"/>
</dbReference>
<dbReference type="PRINTS" id="PR00064">
    <property type="entry name" value="RIBOSOMALL35"/>
</dbReference>
<dbReference type="SUPFAM" id="SSF143034">
    <property type="entry name" value="L35p-like"/>
    <property type="match status" value="1"/>
</dbReference>
<dbReference type="PROSITE" id="PS00936">
    <property type="entry name" value="RIBOSOMAL_L35"/>
    <property type="match status" value="1"/>
</dbReference>
<sequence length="65" mass="7415">MPKMKTKKSASKRFTARPGGTIKRGQAFKRHILTKKTTKNKRQLRGTEGVHETNLKSVRAMMPYA</sequence>